<reference key="1">
    <citation type="journal article" date="2003" name="Nature">
        <title>Basal body dysfunction is a likely cause of pleiotropic Bardet-Biedl syndrome.</title>
        <authorList>
            <person name="Ansley S.J."/>
            <person name="Badano J.L."/>
            <person name="Blacque O.E."/>
            <person name="Hill J."/>
            <person name="Hoskins B.E."/>
            <person name="Leitch C.C."/>
            <person name="Kim J.C."/>
            <person name="Ross A.J."/>
            <person name="Eichers E.R."/>
            <person name="Teslovich T.M."/>
            <person name="Mah A.K."/>
            <person name="Johnsen R.C."/>
            <person name="Cavender J.C."/>
            <person name="Lewis R.A."/>
            <person name="Leroux M.R."/>
            <person name="Beales P.L."/>
            <person name="Katsanis N."/>
        </authorList>
    </citation>
    <scope>NUCLEOTIDE SEQUENCE [MRNA] (ISOFORMS 3 AND 4)</scope>
    <scope>VARIANT BBS8 197-GLU-TYR-198 DEL</scope>
    <scope>VARIANT RP51 38-ASP--HIS-47 DEL</scope>
</reference>
<reference key="2">
    <citation type="submission" date="2003-02" db="EMBL/GenBank/DDBJ databases">
        <title>Full-length cDNA libraries and normalization.</title>
        <authorList>
            <person name="Li W.B."/>
            <person name="Gruber C."/>
            <person name="Jessee J."/>
            <person name="Polayes D."/>
        </authorList>
    </citation>
    <scope>NUCLEOTIDE SEQUENCE [LARGE SCALE MRNA] (ISOFORMS 2 AND 5)</scope>
    <scope>NUCLEOTIDE SEQUENCE [LARGE SCALE MRNA] OF 102-541 (ISOFORM 3)</scope>
    <scope>VARIANT RP51 38-ASP--HIS-47 DEL</scope>
    <source>
        <tissue>Cervix carcinoma</tissue>
        <tissue>Neuroblastoma</tissue>
        <tissue>Placenta</tissue>
    </source>
</reference>
<reference key="3">
    <citation type="submission" date="2003-08" db="EMBL/GenBank/DDBJ databases">
        <title>Mutations in BBS8, a novel gene containing TPR motifs causes Bardet-Biedl syndrome.</title>
        <authorList>
            <person name="Smaoui N."/>
            <person name="Li S."/>
            <person name="Belghith N."/>
            <person name="Chaabouni M."/>
            <person name="M'Rad R."/>
            <person name="Maazoul F."/>
            <person name="Chaabouni H."/>
            <person name="Hejtmancik J.F."/>
        </authorList>
    </citation>
    <scope>NUCLEOTIDE SEQUENCE [MRNA] (ISOFORM 4)</scope>
    <scope>VARIANT RP51 38-ASP--HIS-47 DEL</scope>
</reference>
<reference key="4">
    <citation type="journal article" date="2004" name="Nat. Genet.">
        <title>Complete sequencing and characterization of 21,243 full-length human cDNAs.</title>
        <authorList>
            <person name="Ota T."/>
            <person name="Suzuki Y."/>
            <person name="Nishikawa T."/>
            <person name="Otsuki T."/>
            <person name="Sugiyama T."/>
            <person name="Irie R."/>
            <person name="Wakamatsu A."/>
            <person name="Hayashi K."/>
            <person name="Sato H."/>
            <person name="Nagai K."/>
            <person name="Kimura K."/>
            <person name="Makita H."/>
            <person name="Sekine M."/>
            <person name="Obayashi M."/>
            <person name="Nishi T."/>
            <person name="Shibahara T."/>
            <person name="Tanaka T."/>
            <person name="Ishii S."/>
            <person name="Yamamoto J."/>
            <person name="Saito K."/>
            <person name="Kawai Y."/>
            <person name="Isono Y."/>
            <person name="Nakamura Y."/>
            <person name="Nagahari K."/>
            <person name="Murakami K."/>
            <person name="Yasuda T."/>
            <person name="Iwayanagi T."/>
            <person name="Wagatsuma M."/>
            <person name="Shiratori A."/>
            <person name="Sudo H."/>
            <person name="Hosoiri T."/>
            <person name="Kaku Y."/>
            <person name="Kodaira H."/>
            <person name="Kondo H."/>
            <person name="Sugawara M."/>
            <person name="Takahashi M."/>
            <person name="Kanda K."/>
            <person name="Yokoi T."/>
            <person name="Furuya T."/>
            <person name="Kikkawa E."/>
            <person name="Omura Y."/>
            <person name="Abe K."/>
            <person name="Kamihara K."/>
            <person name="Katsuta N."/>
            <person name="Sato K."/>
            <person name="Tanikawa M."/>
            <person name="Yamazaki M."/>
            <person name="Ninomiya K."/>
            <person name="Ishibashi T."/>
            <person name="Yamashita H."/>
            <person name="Murakawa K."/>
            <person name="Fujimori K."/>
            <person name="Tanai H."/>
            <person name="Kimata M."/>
            <person name="Watanabe M."/>
            <person name="Hiraoka S."/>
            <person name="Chiba Y."/>
            <person name="Ishida S."/>
            <person name="Ono Y."/>
            <person name="Takiguchi S."/>
            <person name="Watanabe S."/>
            <person name="Yosida M."/>
            <person name="Hotuta T."/>
            <person name="Kusano J."/>
            <person name="Kanehori K."/>
            <person name="Takahashi-Fujii A."/>
            <person name="Hara H."/>
            <person name="Tanase T.-O."/>
            <person name="Nomura Y."/>
            <person name="Togiya S."/>
            <person name="Komai F."/>
            <person name="Hara R."/>
            <person name="Takeuchi K."/>
            <person name="Arita M."/>
            <person name="Imose N."/>
            <person name="Musashino K."/>
            <person name="Yuuki H."/>
            <person name="Oshima A."/>
            <person name="Sasaki N."/>
            <person name="Aotsuka S."/>
            <person name="Yoshikawa Y."/>
            <person name="Matsunawa H."/>
            <person name="Ichihara T."/>
            <person name="Shiohata N."/>
            <person name="Sano S."/>
            <person name="Moriya S."/>
            <person name="Momiyama H."/>
            <person name="Satoh N."/>
            <person name="Takami S."/>
            <person name="Terashima Y."/>
            <person name="Suzuki O."/>
            <person name="Nakagawa S."/>
            <person name="Senoh A."/>
            <person name="Mizoguchi H."/>
            <person name="Goto Y."/>
            <person name="Shimizu F."/>
            <person name="Wakebe H."/>
            <person name="Hishigaki H."/>
            <person name="Watanabe T."/>
            <person name="Sugiyama A."/>
            <person name="Takemoto M."/>
            <person name="Kawakami B."/>
            <person name="Yamazaki M."/>
            <person name="Watanabe K."/>
            <person name="Kumagai A."/>
            <person name="Itakura S."/>
            <person name="Fukuzumi Y."/>
            <person name="Fujimori Y."/>
            <person name="Komiyama M."/>
            <person name="Tashiro H."/>
            <person name="Tanigami A."/>
            <person name="Fujiwara T."/>
            <person name="Ono T."/>
            <person name="Yamada K."/>
            <person name="Fujii Y."/>
            <person name="Ozaki K."/>
            <person name="Hirao M."/>
            <person name="Ohmori Y."/>
            <person name="Kawabata A."/>
            <person name="Hikiji T."/>
            <person name="Kobatake N."/>
            <person name="Inagaki H."/>
            <person name="Ikema Y."/>
            <person name="Okamoto S."/>
            <person name="Okitani R."/>
            <person name="Kawakami T."/>
            <person name="Noguchi S."/>
            <person name="Itoh T."/>
            <person name="Shigeta K."/>
            <person name="Senba T."/>
            <person name="Matsumura K."/>
            <person name="Nakajima Y."/>
            <person name="Mizuno T."/>
            <person name="Morinaga M."/>
            <person name="Sasaki M."/>
            <person name="Togashi T."/>
            <person name="Oyama M."/>
            <person name="Hata H."/>
            <person name="Watanabe M."/>
            <person name="Komatsu T."/>
            <person name="Mizushima-Sugano J."/>
            <person name="Satoh T."/>
            <person name="Shirai Y."/>
            <person name="Takahashi Y."/>
            <person name="Nakagawa K."/>
            <person name="Okumura K."/>
            <person name="Nagase T."/>
            <person name="Nomura N."/>
            <person name="Kikuchi H."/>
            <person name="Masuho Y."/>
            <person name="Yamashita R."/>
            <person name="Nakai K."/>
            <person name="Yada T."/>
            <person name="Nakamura Y."/>
            <person name="Ohara O."/>
            <person name="Isogai T."/>
            <person name="Sugano S."/>
        </authorList>
    </citation>
    <scope>NUCLEOTIDE SEQUENCE [LARGE SCALE MRNA] (ISOFORM 4)</scope>
    <source>
        <tissue>Amygdala</tissue>
    </source>
</reference>
<reference key="5">
    <citation type="journal article" date="2007" name="BMC Genomics">
        <title>The full-ORF clone resource of the German cDNA consortium.</title>
        <authorList>
            <person name="Bechtel S."/>
            <person name="Rosenfelder H."/>
            <person name="Duda A."/>
            <person name="Schmidt C.P."/>
            <person name="Ernst U."/>
            <person name="Wellenreuther R."/>
            <person name="Mehrle A."/>
            <person name="Schuster C."/>
            <person name="Bahr A."/>
            <person name="Bloecker H."/>
            <person name="Heubner D."/>
            <person name="Hoerlein A."/>
            <person name="Michel G."/>
            <person name="Wedler H."/>
            <person name="Koehrer K."/>
            <person name="Ottenwaelder B."/>
            <person name="Poustka A."/>
            <person name="Wiemann S."/>
            <person name="Schupp I."/>
        </authorList>
    </citation>
    <scope>NUCLEOTIDE SEQUENCE [LARGE SCALE MRNA] (ISOFORM 3)</scope>
    <scope>VARIANT RP51 38-ASP--HIS-47 DEL</scope>
    <source>
        <tissue>Testis</tissue>
    </source>
</reference>
<reference key="6">
    <citation type="journal article" date="2003" name="Nature">
        <title>The DNA sequence and analysis of human chromosome 14.</title>
        <authorList>
            <person name="Heilig R."/>
            <person name="Eckenberg R."/>
            <person name="Petit J.-L."/>
            <person name="Fonknechten N."/>
            <person name="Da Silva C."/>
            <person name="Cattolico L."/>
            <person name="Levy M."/>
            <person name="Barbe V."/>
            <person name="De Berardinis V."/>
            <person name="Ureta-Vidal A."/>
            <person name="Pelletier E."/>
            <person name="Vico V."/>
            <person name="Anthouard V."/>
            <person name="Rowen L."/>
            <person name="Madan A."/>
            <person name="Qin S."/>
            <person name="Sun H."/>
            <person name="Du H."/>
            <person name="Pepin K."/>
            <person name="Artiguenave F."/>
            <person name="Robert C."/>
            <person name="Cruaud C."/>
            <person name="Bruels T."/>
            <person name="Jaillon O."/>
            <person name="Friedlander L."/>
            <person name="Samson G."/>
            <person name="Brottier P."/>
            <person name="Cure S."/>
            <person name="Segurens B."/>
            <person name="Aniere F."/>
            <person name="Samain S."/>
            <person name="Crespeau H."/>
            <person name="Abbasi N."/>
            <person name="Aiach N."/>
            <person name="Boscus D."/>
            <person name="Dickhoff R."/>
            <person name="Dors M."/>
            <person name="Dubois I."/>
            <person name="Friedman C."/>
            <person name="Gouyvenoux M."/>
            <person name="James R."/>
            <person name="Madan A."/>
            <person name="Mairey-Estrada B."/>
            <person name="Mangenot S."/>
            <person name="Martins N."/>
            <person name="Menard M."/>
            <person name="Oztas S."/>
            <person name="Ratcliffe A."/>
            <person name="Shaffer T."/>
            <person name="Trask B."/>
            <person name="Vacherie B."/>
            <person name="Bellemere C."/>
            <person name="Belser C."/>
            <person name="Besnard-Gonnet M."/>
            <person name="Bartol-Mavel D."/>
            <person name="Boutard M."/>
            <person name="Briez-Silla S."/>
            <person name="Combette S."/>
            <person name="Dufosse-Laurent V."/>
            <person name="Ferron C."/>
            <person name="Lechaplais C."/>
            <person name="Louesse C."/>
            <person name="Muselet D."/>
            <person name="Magdelenat G."/>
            <person name="Pateau E."/>
            <person name="Petit E."/>
            <person name="Sirvain-Trukniewicz P."/>
            <person name="Trybou A."/>
            <person name="Vega-Czarny N."/>
            <person name="Bataille E."/>
            <person name="Bluet E."/>
            <person name="Bordelais I."/>
            <person name="Dubois M."/>
            <person name="Dumont C."/>
            <person name="Guerin T."/>
            <person name="Haffray S."/>
            <person name="Hammadi R."/>
            <person name="Muanga J."/>
            <person name="Pellouin V."/>
            <person name="Robert D."/>
            <person name="Wunderle E."/>
            <person name="Gauguet G."/>
            <person name="Roy A."/>
            <person name="Sainte-Marthe L."/>
            <person name="Verdier J."/>
            <person name="Verdier-Discala C."/>
            <person name="Hillier L.W."/>
            <person name="Fulton L."/>
            <person name="McPherson J."/>
            <person name="Matsuda F."/>
            <person name="Wilson R."/>
            <person name="Scarpelli C."/>
            <person name="Gyapay G."/>
            <person name="Wincker P."/>
            <person name="Saurin W."/>
            <person name="Quetier F."/>
            <person name="Waterston R."/>
            <person name="Hood L."/>
            <person name="Weissenbach J."/>
        </authorList>
    </citation>
    <scope>NUCLEOTIDE SEQUENCE [LARGE SCALE GENOMIC DNA]</scope>
</reference>
<reference key="7">
    <citation type="submission" date="2005-07" db="EMBL/GenBank/DDBJ databases">
        <authorList>
            <person name="Mural R.J."/>
            <person name="Istrail S."/>
            <person name="Sutton G.G."/>
            <person name="Florea L."/>
            <person name="Halpern A.L."/>
            <person name="Mobarry C.M."/>
            <person name="Lippert R."/>
            <person name="Walenz B."/>
            <person name="Shatkay H."/>
            <person name="Dew I."/>
            <person name="Miller J.R."/>
            <person name="Flanigan M.J."/>
            <person name="Edwards N.J."/>
            <person name="Bolanos R."/>
            <person name="Fasulo D."/>
            <person name="Halldorsson B.V."/>
            <person name="Hannenhalli S."/>
            <person name="Turner R."/>
            <person name="Yooseph S."/>
            <person name="Lu F."/>
            <person name="Nusskern D.R."/>
            <person name="Shue B.C."/>
            <person name="Zheng X.H."/>
            <person name="Zhong F."/>
            <person name="Delcher A.L."/>
            <person name="Huson D.H."/>
            <person name="Kravitz S.A."/>
            <person name="Mouchard L."/>
            <person name="Reinert K."/>
            <person name="Remington K.A."/>
            <person name="Clark A.G."/>
            <person name="Waterman M.S."/>
            <person name="Eichler E.E."/>
            <person name="Adams M.D."/>
            <person name="Hunkapiller M.W."/>
            <person name="Myers E.W."/>
            <person name="Venter J.C."/>
        </authorList>
    </citation>
    <scope>NUCLEOTIDE SEQUENCE [LARGE SCALE GENOMIC DNA]</scope>
    <scope>VARIANT RP51 38-ASP--HIS-47 DEL</scope>
</reference>
<reference key="8">
    <citation type="journal article" date="2004" name="Genome Res.">
        <title>The status, quality, and expansion of the NIH full-length cDNA project: the Mammalian Gene Collection (MGC).</title>
        <authorList>
            <consortium name="The MGC Project Team"/>
        </authorList>
    </citation>
    <scope>NUCLEOTIDE SEQUENCE [LARGE SCALE MRNA] (ISOFORMS 1 AND 4)</scope>
    <scope>VARIANT RP51 38-ASP--HIS-47 DEL</scope>
    <source>
        <tissue>Brain</tissue>
        <tissue>Pituitary</tissue>
        <tissue>Placenta</tissue>
    </source>
</reference>
<reference key="9">
    <citation type="journal article" date="2006" name="J. Hum. Genet.">
        <title>BBS8 is rarely mutated in a cohort of 128 Bardet-Biedl syndrome families.</title>
        <authorList>
            <person name="Stoetzel C."/>
            <person name="Laurier V."/>
            <person name="Faivre L."/>
            <person name="Megarbane A."/>
            <person name="Perrin-Schmitt F."/>
            <person name="Verloes A."/>
            <person name="Bonneau D."/>
            <person name="Mandel J.-L."/>
            <person name="Cossee M."/>
            <person name="Dollfus H."/>
        </authorList>
    </citation>
    <scope>INVOLVEMENT IN BBS8</scope>
</reference>
<reference key="10">
    <citation type="journal article" date="2006" name="Nature">
        <title>Dissection of epistasis in oligogenic Bardet-Biedl syndrome.</title>
        <authorList>
            <person name="Badano J.L."/>
            <person name="Leitch C.C."/>
            <person name="Ansley S.J."/>
            <person name="May-Simera H."/>
            <person name="Lawson S."/>
            <person name="Lewis R.A."/>
            <person name="Beales P.L."/>
            <person name="Dietz H.C."/>
            <person name="Fisher S."/>
            <person name="Katsanis N."/>
        </authorList>
    </citation>
    <scope>INTERACTION WITH CCDC28B</scope>
</reference>
<reference key="11">
    <citation type="journal article" date="2007" name="Cell">
        <title>A core complex of BBS proteins cooperates with the GTPase Rab8 to promote ciliary membrane biogenesis.</title>
        <authorList>
            <person name="Nachury M.V."/>
            <person name="Loktev A.V."/>
            <person name="Zhang Q."/>
            <person name="Westlake C.J."/>
            <person name="Peraenen J."/>
            <person name="Merdes A."/>
            <person name="Slusarski D.C."/>
            <person name="Scheller R.H."/>
            <person name="Bazan J.F."/>
            <person name="Sheffield V.C."/>
            <person name="Jackson P.K."/>
        </authorList>
    </citation>
    <scope>IDENTIFICATION BY MASS SPECTROMETRY</scope>
    <scope>SUBUNIT</scope>
    <scope>FUNCTION</scope>
    <scope>SUBCELLULAR LOCATION</scope>
</reference>
<reference key="12">
    <citation type="journal article" date="2011" name="PLoS Genet.">
        <title>A novel protein LZTFL1 regulates ciliary trafficking of the BBSome and Smoothened.</title>
        <authorList>
            <person name="Seo S."/>
            <person name="Zhang Q."/>
            <person name="Bugge K."/>
            <person name="Breslow D.K."/>
            <person name="Searby C.C."/>
            <person name="Nachury M.V."/>
            <person name="Sheffield V.C."/>
        </authorList>
    </citation>
    <scope>FUNCTION</scope>
    <scope>FUNCTION OF THE BBSOME COMPLEX</scope>
    <scope>IDENTIFICATION IN THE BBSOME COMPLEX</scope>
    <scope>SUBCELLULAR LOCATION</scope>
</reference>
<reference key="13">
    <citation type="journal article" date="2014" name="Hum. Mol. Genet.">
        <title>Bardet-Biedl syndrome proteins 1 and 3 regulate the ciliary trafficking of polycystic kidney disease 1 protein.</title>
        <authorList>
            <person name="Su X."/>
            <person name="Driscoll K."/>
            <person name="Yao G."/>
            <person name="Raed A."/>
            <person name="Wu M."/>
            <person name="Beales P.L."/>
            <person name="Zhou J."/>
        </authorList>
    </citation>
    <scope>INTERACTION WITH PKD1</scope>
</reference>
<reference key="14">
    <citation type="journal article" date="2010" name="Am. J. Hum. Genet.">
        <title>A splice-site mutation in a retina-specific exon of BBS8 causes nonsyndromic retinitis pigmentosa.</title>
        <authorList>
            <person name="Riazuddin S.A."/>
            <person name="Iqbal M."/>
            <person name="Wang Y."/>
            <person name="Masuda T."/>
            <person name="Chen Y."/>
            <person name="Bowne S."/>
            <person name="Sullivan L.S."/>
            <person name="Waseem N.H."/>
            <person name="Bhattacharya S."/>
            <person name="Daiger S.P."/>
            <person name="Zhang K."/>
            <person name="Khan S.N."/>
            <person name="Riazuddin S."/>
            <person name="Hejtmancik J.F."/>
            <person name="Sieving P.A."/>
            <person name="Zack D.J."/>
            <person name="Katsanis N."/>
        </authorList>
    </citation>
    <scope>VARIANT RP51 38-ASP--HIS-47 DEL</scope>
</reference>
<comment type="function">
    <text evidence="7 10">The BBSome complex is thought to function as a coat complex required for sorting of specific membrane proteins to the primary cilia. The BBSome complex is required for ciliogenesis but is dispensable for centriolar satellite function. This ciliogenic function is mediated in part by the Rab8 GDP/GTP exchange factor, which localizes to the basal body and contacts the BBSome. Rab8(GTP) enters the primary cilium and promotes extension of the ciliary membrane. Firstly the BBSome associates with the ciliary membrane and binds to RAB3IP/Rabin8, the guanosyl exchange factor (GEF) for Rab8 and then the Rab8-GTP localizes to the cilium and promotes docking and fusion of carrier vesicles to the base of the ciliary membrane. The BBSome complex, together with the LTZL1, controls SMO ciliary trafficking and contributes to the sonic hedgehog (SHH) pathway regulation. Required for proper BBSome complex assembly and its ciliary localization.</text>
</comment>
<comment type="subunit">
    <text evidence="6 7 10 11">Part of BBSome complex, that contains BBS1, BBS2, BBS4, BBS5, BBS7, BBS8/TTC8, BBS9 and BBIP10. Interacts with PCM1. Interacts with CCDC28B. Interacts with PKD1 (PubMed:24939912).</text>
</comment>
<comment type="interaction">
    <interactant intactId="EBI-2892638">
        <id>Q8TAM2</id>
    </interactant>
    <interactant intactId="EBI-2826852">
        <id>Q3SYG4</id>
        <label>BBS9</label>
    </interactant>
    <organismsDiffer>false</organismsDiffer>
    <experiments>2</experiments>
</comment>
<comment type="interaction">
    <interactant intactId="EBI-2892638">
        <id>Q8TAM2</id>
    </interactant>
    <interactant intactId="EBI-2805823">
        <id>Q15051</id>
        <label>IQCB1</label>
    </interactant>
    <organismsDiffer>false</organismsDiffer>
    <experiments>5</experiments>
</comment>
<comment type="subcellular location">
    <subcellularLocation>
        <location evidence="7">Cytoplasm</location>
        <location evidence="7">Cytoskeleton</location>
        <location evidence="7">Microtubule organizing center</location>
        <location evidence="7">Centrosome</location>
    </subcellularLocation>
    <subcellularLocation>
        <location evidence="7">Cell projection</location>
        <location evidence="7">Cilium membrane</location>
    </subcellularLocation>
    <subcellularLocation>
        <location evidence="10">Cytoplasm</location>
    </subcellularLocation>
    <subcellularLocation>
        <location evidence="7">Cytoplasm</location>
        <location evidence="7">Cytoskeleton</location>
        <location evidence="7">Microtubule organizing center</location>
        <location evidence="7">Centrosome</location>
        <location evidence="7">Centriolar satellite</location>
    </subcellularLocation>
    <subcellularLocation>
        <location evidence="1">Cell projection</location>
        <location evidence="1">Cilium</location>
    </subcellularLocation>
</comment>
<comment type="alternative products">
    <event type="alternative splicing"/>
    <isoform>
        <id>Q8TAM2-1</id>
        <name>1</name>
        <sequence type="displayed"/>
    </isoform>
    <isoform>
        <id>Q8TAM2-2</id>
        <name>2</name>
        <sequence type="described" ref="VSP_007821"/>
    </isoform>
    <isoform>
        <id>Q8TAM2-3</id>
        <name>3</name>
        <sequence type="described" ref="VSP_007822 VSP_007823"/>
    </isoform>
    <isoform>
        <id>Q8TAM2-4</id>
        <name>4</name>
        <sequence type="described" ref="VSP_007823"/>
    </isoform>
    <isoform>
        <id>Q8TAM2-6</id>
        <name>5</name>
        <sequence type="described" ref="VSP_041151 VSP_041152"/>
    </isoform>
</comment>
<comment type="tissue specificity">
    <text>Widely expressed.</text>
</comment>
<comment type="disease" evidence="3 4 8 9 12 13 14">
    <disease id="DI-02707">
        <name>Retinitis pigmentosa 51</name>
        <acronym>RP51</acronym>
        <description>A retinal dystrophy belonging to the group of pigmentary retinopathies. Retinitis pigmentosa is characterized by retinal pigment deposits visible on fundus examination and primary loss of rod photoreceptor cells followed by secondary loss of cone photoreceptors. Patients typically have night vision blindness and loss of midperipheral visual field. As their condition progresses, they lose their far peripheral visual field and eventually central vision as well.</description>
        <dbReference type="MIM" id="613464"/>
    </disease>
    <text>The disease is caused by variants affecting the gene represented in this entry.</text>
</comment>
<comment type="disease" evidence="3 5">
    <disease id="DI-00166">
        <name>Bardet-Biedl syndrome 8</name>
        <acronym>BBS8</acronym>
        <description>A syndrome characterized by usually severe pigmentary retinopathy, early-onset obesity, polydactyly, hypogenitalism, renal malformation and intellectual disability. Secondary features include diabetes mellitus, hypertension and congenital heart disease. Bardet-Biedl syndrome inheritance is autosomal recessive, but three mutated alleles (two at one locus, and a third at a second locus) may be required for clinical manifestation of some forms of the disease.</description>
        <dbReference type="MIM" id="615985"/>
    </disease>
    <text>The disease is caused by variants affecting the gene represented in this entry.</text>
</comment>
<comment type="miscellaneous">
    <molecule>Isoform 5</molecule>
    <text evidence="21">May be produced at very low levels due to a premature stop codon in the mRNA, leading to nonsense-mediated mRNA decay.</text>
</comment>
<comment type="sequence caution" evidence="21">
    <conflict type="erroneous translation">
        <sequence resource="EMBL-CDS" id="CAD61928"/>
    </conflict>
    <text>Wrong choice of CDS.</text>
</comment>
<comment type="sequence caution" evidence="21">
    <conflict type="erroneous initiation">
        <sequence resource="EMBL-CDS" id="CAD62360"/>
    </conflict>
    <text>Extended N-terminus.</text>
</comment>
<proteinExistence type="evidence at protein level"/>
<evidence type="ECO:0000250" key="1">
    <source>
        <dbReference type="UniProtKB" id="Q8VD72"/>
    </source>
</evidence>
<evidence type="ECO:0000256" key="2">
    <source>
        <dbReference type="SAM" id="MobiDB-lite"/>
    </source>
</evidence>
<evidence type="ECO:0000269" key="3">
    <source>
    </source>
</evidence>
<evidence type="ECO:0000269" key="4">
    <source>
    </source>
</evidence>
<evidence type="ECO:0000269" key="5">
    <source>
    </source>
</evidence>
<evidence type="ECO:0000269" key="6">
    <source>
    </source>
</evidence>
<evidence type="ECO:0000269" key="7">
    <source>
    </source>
</evidence>
<evidence type="ECO:0000269" key="8">
    <source>
    </source>
</evidence>
<evidence type="ECO:0000269" key="9">
    <source>
    </source>
</evidence>
<evidence type="ECO:0000269" key="10">
    <source>
    </source>
</evidence>
<evidence type="ECO:0000269" key="11">
    <source>
    </source>
</evidence>
<evidence type="ECO:0000269" key="12">
    <source ref="2"/>
</evidence>
<evidence type="ECO:0000269" key="13">
    <source ref="3"/>
</evidence>
<evidence type="ECO:0000269" key="14">
    <source ref="7"/>
</evidence>
<evidence type="ECO:0000303" key="15">
    <source>
    </source>
</evidence>
<evidence type="ECO:0000303" key="16">
    <source>
    </source>
</evidence>
<evidence type="ECO:0000303" key="17">
    <source>
    </source>
</evidence>
<evidence type="ECO:0000303" key="18">
    <source>
    </source>
</evidence>
<evidence type="ECO:0000303" key="19">
    <source ref="2"/>
</evidence>
<evidence type="ECO:0000303" key="20">
    <source ref="3"/>
</evidence>
<evidence type="ECO:0000305" key="21"/>
<name>TTC8_HUMAN</name>
<accession>Q8TAM2</accession>
<accession>A6NFG2</accession>
<accession>B3KWA5</accession>
<accession>Q67B97</accession>
<accession>Q86SY0</accession>
<accession>Q86TV9</accession>
<accession>Q86U26</accession>
<accession>Q8NDH9</accession>
<accession>Q96DG8</accession>
<keyword id="KW-0025">Alternative splicing</keyword>
<keyword id="KW-0083">Bardet-Biedl syndrome</keyword>
<keyword id="KW-1003">Cell membrane</keyword>
<keyword id="KW-0966">Cell projection</keyword>
<keyword id="KW-1186">Ciliopathy</keyword>
<keyword id="KW-0969">Cilium</keyword>
<keyword id="KW-0970">Cilium biogenesis/degradation</keyword>
<keyword id="KW-0963">Cytoplasm</keyword>
<keyword id="KW-0206">Cytoskeleton</keyword>
<keyword id="KW-0225">Disease variant</keyword>
<keyword id="KW-0991">Intellectual disability</keyword>
<keyword id="KW-0472">Membrane</keyword>
<keyword id="KW-0550">Obesity</keyword>
<keyword id="KW-0653">Protein transport</keyword>
<keyword id="KW-1267">Proteomics identification</keyword>
<keyword id="KW-1185">Reference proteome</keyword>
<keyword id="KW-0677">Repeat</keyword>
<keyword id="KW-0682">Retinitis pigmentosa</keyword>
<keyword id="KW-0802">TPR repeat</keyword>
<keyword id="KW-0813">Transport</keyword>
<feature type="chain" id="PRO_0000106388" description="Tetratricopeptide repeat protein 8">
    <location>
        <begin position="1"/>
        <end position="541"/>
    </location>
</feature>
<feature type="repeat" description="TPR 1">
    <location>
        <begin position="14"/>
        <end position="47"/>
    </location>
</feature>
<feature type="repeat" description="TPR 2">
    <location>
        <begin position="251"/>
        <end position="284"/>
    </location>
</feature>
<feature type="repeat" description="TPR 3">
    <location>
        <begin position="285"/>
        <end position="317"/>
    </location>
</feature>
<feature type="repeat" description="TPR 4">
    <location>
        <begin position="318"/>
        <end position="351"/>
    </location>
</feature>
<feature type="repeat" description="TPR 5">
    <location>
        <begin position="352"/>
        <end position="385"/>
    </location>
</feature>
<feature type="repeat" description="TPR 6">
    <location>
        <begin position="386"/>
        <end position="419"/>
    </location>
</feature>
<feature type="repeat" description="TPR 7">
    <location>
        <begin position="423"/>
        <end position="456"/>
    </location>
</feature>
<feature type="repeat" description="TPR 8">
    <location>
        <begin position="457"/>
        <end position="490"/>
    </location>
</feature>
<feature type="region of interest" description="Disordered" evidence="2">
    <location>
        <begin position="118"/>
        <end position="137"/>
    </location>
</feature>
<feature type="splice variant" id="VSP_007821" description="In isoform 2." evidence="19">
    <location>
        <begin position="39"/>
        <end position="329"/>
    </location>
</feature>
<feature type="splice variant" id="VSP_007822" description="In isoform 3." evidence="15 18 19">
    <location>
        <begin position="164"/>
        <end position="193"/>
    </location>
</feature>
<feature type="splice variant" id="VSP_041151" description="In isoform 5." evidence="19">
    <original>ALF</original>
    <variation>VCT</variation>
    <location>
        <begin position="194"/>
        <end position="196"/>
    </location>
</feature>
<feature type="splice variant" id="VSP_041152" description="In isoform 5." evidence="19">
    <location>
        <begin position="197"/>
        <end position="541"/>
    </location>
</feature>
<feature type="splice variant" id="VSP_007823" description="In isoform 3 and isoform 4." evidence="15 16 17 18 19 20">
    <location>
        <begin position="209"/>
        <end position="234"/>
    </location>
</feature>
<feature type="sequence variant" id="VAR_063705" description="In RP51.">
    <location>
        <begin position="38"/>
        <end position="47"/>
    </location>
</feature>
<feature type="sequence variant" id="VAR_017247" description="In BBS8." evidence="3">
    <location>
        <begin position="197"/>
        <end position="198"/>
    </location>
</feature>
<feature type="sequence conflict" description="In Ref. 4; BAG54067." evidence="21" ref="4">
    <original>L</original>
    <variation>I</variation>
    <location>
        <position position="177"/>
    </location>
</feature>
<gene>
    <name type="primary">TTC8</name>
    <name type="synonym">BBS8</name>
</gene>
<dbReference type="EMBL" id="AY366523">
    <property type="protein sequence ID" value="AAR02192.1"/>
    <property type="molecule type" value="mRNA"/>
</dbReference>
<dbReference type="EMBL" id="AY366524">
    <property type="protein sequence ID" value="AAR02193.1"/>
    <property type="molecule type" value="mRNA"/>
</dbReference>
<dbReference type="EMBL" id="BX161472">
    <property type="protein sequence ID" value="CAD61928.1"/>
    <property type="status" value="ALT_SEQ"/>
    <property type="molecule type" value="mRNA"/>
</dbReference>
<dbReference type="EMBL" id="BX248071">
    <property type="protein sequence ID" value="CAD62360.1"/>
    <property type="status" value="ALT_INIT"/>
    <property type="molecule type" value="mRNA"/>
</dbReference>
<dbReference type="EMBL" id="BX248248">
    <property type="protein sequence ID" value="CAD62576.1"/>
    <property type="molecule type" value="mRNA"/>
</dbReference>
<dbReference type="EMBL" id="AY373972">
    <property type="protein sequence ID" value="AAR19043.1"/>
    <property type="molecule type" value="mRNA"/>
</dbReference>
<dbReference type="EMBL" id="AK124675">
    <property type="protein sequence ID" value="BAG54067.1"/>
    <property type="molecule type" value="mRNA"/>
</dbReference>
<dbReference type="EMBL" id="AL833901">
    <property type="protein sequence ID" value="CAD38757.2"/>
    <property type="molecule type" value="mRNA"/>
</dbReference>
<dbReference type="EMBL" id="AL121768">
    <property type="status" value="NOT_ANNOTATED_CDS"/>
    <property type="molecule type" value="Genomic_DNA"/>
</dbReference>
<dbReference type="EMBL" id="AL133238">
    <property type="status" value="NOT_ANNOTATED_CDS"/>
    <property type="molecule type" value="Genomic_DNA"/>
</dbReference>
<dbReference type="EMBL" id="CH471061">
    <property type="protein sequence ID" value="EAW81400.1"/>
    <property type="molecule type" value="Genomic_DNA"/>
</dbReference>
<dbReference type="EMBL" id="CH471061">
    <property type="protein sequence ID" value="EAW81402.1"/>
    <property type="molecule type" value="Genomic_DNA"/>
</dbReference>
<dbReference type="EMBL" id="BC001563">
    <property type="protein sequence ID" value="AAH01563.1"/>
    <property type="molecule type" value="mRNA"/>
</dbReference>
<dbReference type="EMBL" id="BC026351">
    <property type="protein sequence ID" value="AAH26351.1"/>
    <property type="molecule type" value="mRNA"/>
</dbReference>
<dbReference type="EMBL" id="BC095433">
    <property type="protein sequence ID" value="AAH95433.1"/>
    <property type="molecule type" value="mRNA"/>
</dbReference>
<dbReference type="CCDS" id="CCDS32137.1">
    <molecule id="Q8TAM2-4"/>
</dbReference>
<dbReference type="RefSeq" id="NP_001275710.1">
    <property type="nucleotide sequence ID" value="NM_001288781.1"/>
</dbReference>
<dbReference type="RefSeq" id="NP_001275711.1">
    <property type="nucleotide sequence ID" value="NM_001288782.1"/>
</dbReference>
<dbReference type="RefSeq" id="NP_001275712.1">
    <property type="nucleotide sequence ID" value="NM_001288783.1"/>
</dbReference>
<dbReference type="RefSeq" id="NP_653197.2">
    <molecule id="Q8TAM2-4"/>
    <property type="nucleotide sequence ID" value="NM_144596.3"/>
</dbReference>
<dbReference type="RefSeq" id="NP_938051.1">
    <property type="nucleotide sequence ID" value="NM_198309.3"/>
</dbReference>
<dbReference type="RefSeq" id="NP_938052.1">
    <property type="nucleotide sequence ID" value="NM_198310.3"/>
</dbReference>
<dbReference type="RefSeq" id="XP_006720098.1">
    <property type="nucleotide sequence ID" value="XM_006720035.1"/>
</dbReference>
<dbReference type="RefSeq" id="XP_006720100.1">
    <property type="nucleotide sequence ID" value="XM_006720037.2"/>
</dbReference>
<dbReference type="RefSeq" id="XP_011534734.1">
    <property type="nucleotide sequence ID" value="XM_011536432.1"/>
</dbReference>
<dbReference type="SMR" id="Q8TAM2"/>
<dbReference type="BioGRID" id="125811">
    <property type="interactions" value="28"/>
</dbReference>
<dbReference type="ComplexPortal" id="CPX-1908">
    <property type="entry name" value="BBSome complex"/>
</dbReference>
<dbReference type="CORUM" id="Q8TAM2"/>
<dbReference type="DIP" id="DIP-60359N"/>
<dbReference type="FunCoup" id="Q8TAM2">
    <property type="interactions" value="425"/>
</dbReference>
<dbReference type="IntAct" id="Q8TAM2">
    <property type="interactions" value="22"/>
</dbReference>
<dbReference type="STRING" id="9606.ENSP00000482306"/>
<dbReference type="TCDB" id="3.A.33.1.1">
    <property type="family name" value="the bbsome complex (bbsome) family"/>
</dbReference>
<dbReference type="GlyGen" id="Q8TAM2">
    <property type="glycosylation" value="2 sites, 1 N-linked glycan (1 site), 1 O-linked glycan (1 site)"/>
</dbReference>
<dbReference type="iPTMnet" id="Q8TAM2"/>
<dbReference type="PhosphoSitePlus" id="Q8TAM2"/>
<dbReference type="BioMuta" id="TTC8"/>
<dbReference type="DMDM" id="308153511"/>
<dbReference type="jPOST" id="Q8TAM2"/>
<dbReference type="MassIVE" id="Q8TAM2"/>
<dbReference type="PaxDb" id="9606-ENSP00000482306"/>
<dbReference type="PeptideAtlas" id="Q8TAM2"/>
<dbReference type="ProteomicsDB" id="73893">
    <molecule id="Q8TAM2-1"/>
</dbReference>
<dbReference type="ProteomicsDB" id="73894">
    <molecule id="Q8TAM2-2"/>
</dbReference>
<dbReference type="ProteomicsDB" id="73895">
    <molecule id="Q8TAM2-3"/>
</dbReference>
<dbReference type="ProteomicsDB" id="73896">
    <molecule id="Q8TAM2-4"/>
</dbReference>
<dbReference type="ProteomicsDB" id="73897">
    <molecule id="Q8TAM2-6"/>
</dbReference>
<dbReference type="Pumba" id="Q8TAM2"/>
<dbReference type="Antibodypedia" id="141">
    <property type="antibodies" value="211 antibodies from 29 providers"/>
</dbReference>
<dbReference type="DNASU" id="123016"/>
<dbReference type="Ensembl" id="ENST00000354441.10">
    <molecule id="Q8TAM2-2"/>
    <property type="protein sequence ID" value="ENSP00000346427.6"/>
    <property type="gene ID" value="ENSG00000165533.19"/>
</dbReference>
<dbReference type="Ensembl" id="ENST00000380656.7">
    <molecule id="Q8TAM2-4"/>
    <property type="protein sequence ID" value="ENSP00000370031.2"/>
    <property type="gene ID" value="ENSG00000165533.19"/>
</dbReference>
<dbReference type="GeneID" id="123016"/>
<dbReference type="KEGG" id="hsa:123016"/>
<dbReference type="MANE-Select" id="ENST00000380656.7">
    <molecule id="Q8TAM2-4"/>
    <property type="protein sequence ID" value="ENSP00000370031.2"/>
    <property type="RefSeq nucleotide sequence ID" value="NM_144596.4"/>
    <property type="RefSeq protein sequence ID" value="NP_653197.2"/>
</dbReference>
<dbReference type="UCSC" id="uc001xxi.5">
    <molecule id="Q8TAM2-1"/>
    <property type="organism name" value="human"/>
</dbReference>
<dbReference type="AGR" id="HGNC:20087"/>
<dbReference type="CTD" id="123016"/>
<dbReference type="DisGeNET" id="123016"/>
<dbReference type="GeneCards" id="TTC8"/>
<dbReference type="GeneReviews" id="TTC8"/>
<dbReference type="HGNC" id="HGNC:20087">
    <property type="gene designation" value="TTC8"/>
</dbReference>
<dbReference type="HPA" id="ENSG00000165533">
    <property type="expression patterns" value="Low tissue specificity"/>
</dbReference>
<dbReference type="MalaCards" id="TTC8"/>
<dbReference type="MIM" id="608132">
    <property type="type" value="gene"/>
</dbReference>
<dbReference type="MIM" id="613464">
    <property type="type" value="phenotype"/>
</dbReference>
<dbReference type="MIM" id="615985">
    <property type="type" value="phenotype"/>
</dbReference>
<dbReference type="neXtProt" id="NX_Q8TAM2"/>
<dbReference type="OpenTargets" id="ENSG00000165533"/>
<dbReference type="Orphanet" id="110">
    <property type="disease" value="Bardet-Biedl syndrome"/>
</dbReference>
<dbReference type="Orphanet" id="791">
    <property type="disease" value="Retinitis pigmentosa"/>
</dbReference>
<dbReference type="PharmGKB" id="PA134877629"/>
<dbReference type="VEuPathDB" id="HostDB:ENSG00000165533"/>
<dbReference type="eggNOG" id="KOG1129">
    <property type="taxonomic scope" value="Eukaryota"/>
</dbReference>
<dbReference type="GeneTree" id="ENSGT00940000156816"/>
<dbReference type="InParanoid" id="Q8TAM2"/>
<dbReference type="OMA" id="QMGVNSA"/>
<dbReference type="OrthoDB" id="421121at2759"/>
<dbReference type="PAN-GO" id="Q8TAM2">
    <property type="GO annotations" value="4 GO annotations based on evolutionary models"/>
</dbReference>
<dbReference type="PhylomeDB" id="Q8TAM2"/>
<dbReference type="TreeFam" id="TF314892"/>
<dbReference type="PathwayCommons" id="Q8TAM2"/>
<dbReference type="Reactome" id="R-HSA-5620922">
    <property type="pathway name" value="BBSome-mediated cargo-targeting to cilium"/>
</dbReference>
<dbReference type="SignaLink" id="Q8TAM2"/>
<dbReference type="SIGNOR" id="Q8TAM2"/>
<dbReference type="BioGRID-ORCS" id="123016">
    <property type="hits" value="5 hits in 1154 CRISPR screens"/>
</dbReference>
<dbReference type="CD-CODE" id="8C2F96ED">
    <property type="entry name" value="Centrosome"/>
</dbReference>
<dbReference type="ChiTaRS" id="TTC8">
    <property type="organism name" value="human"/>
</dbReference>
<dbReference type="GeneWiki" id="TTC8"/>
<dbReference type="GenomeRNAi" id="123016"/>
<dbReference type="Pharos" id="Q8TAM2">
    <property type="development level" value="Tbio"/>
</dbReference>
<dbReference type="PRO" id="PR:Q8TAM2"/>
<dbReference type="Proteomes" id="UP000005640">
    <property type="component" value="Chromosome 14"/>
</dbReference>
<dbReference type="RNAct" id="Q8TAM2">
    <property type="molecule type" value="protein"/>
</dbReference>
<dbReference type="Bgee" id="ENSG00000165533">
    <property type="expression patterns" value="Expressed in left ovary and 176 other cell types or tissues"/>
</dbReference>
<dbReference type="ExpressionAtlas" id="Q8TAM2">
    <property type="expression patterns" value="baseline and differential"/>
</dbReference>
<dbReference type="GO" id="GO:0034464">
    <property type="term" value="C:BBSome"/>
    <property type="evidence" value="ECO:0000314"/>
    <property type="project" value="UniProtKB"/>
</dbReference>
<dbReference type="GO" id="GO:0034451">
    <property type="term" value="C:centriolar satellite"/>
    <property type="evidence" value="ECO:0007669"/>
    <property type="project" value="UniProtKB-SubCell"/>
</dbReference>
<dbReference type="GO" id="GO:0005813">
    <property type="term" value="C:centrosome"/>
    <property type="evidence" value="ECO:0000314"/>
    <property type="project" value="BHF-UCL"/>
</dbReference>
<dbReference type="GO" id="GO:0036064">
    <property type="term" value="C:ciliary basal body"/>
    <property type="evidence" value="ECO:0000314"/>
    <property type="project" value="BHF-UCL"/>
</dbReference>
<dbReference type="GO" id="GO:0060170">
    <property type="term" value="C:ciliary membrane"/>
    <property type="evidence" value="ECO:0000314"/>
    <property type="project" value="ComplexPortal"/>
</dbReference>
<dbReference type="GO" id="GO:0005929">
    <property type="term" value="C:cilium"/>
    <property type="evidence" value="ECO:0000314"/>
    <property type="project" value="BHF-UCL"/>
</dbReference>
<dbReference type="GO" id="GO:0005829">
    <property type="term" value="C:cytosol"/>
    <property type="evidence" value="ECO:0000304"/>
    <property type="project" value="Reactome"/>
</dbReference>
<dbReference type="GO" id="GO:0001650">
    <property type="term" value="C:fibrillar center"/>
    <property type="evidence" value="ECO:0000314"/>
    <property type="project" value="HPA"/>
</dbReference>
<dbReference type="GO" id="GO:0005739">
    <property type="term" value="C:mitochondrion"/>
    <property type="evidence" value="ECO:0006056"/>
    <property type="project" value="FlyBase"/>
</dbReference>
<dbReference type="GO" id="GO:0097730">
    <property type="term" value="C:non-motile cilium"/>
    <property type="evidence" value="ECO:0000318"/>
    <property type="project" value="GO_Central"/>
</dbReference>
<dbReference type="GO" id="GO:0032391">
    <property type="term" value="C:photoreceptor connecting cilium"/>
    <property type="evidence" value="ECO:0007669"/>
    <property type="project" value="Ensembl"/>
</dbReference>
<dbReference type="GO" id="GO:0061629">
    <property type="term" value="F:RNA polymerase II-specific DNA-binding transcription factor binding"/>
    <property type="evidence" value="ECO:0000353"/>
    <property type="project" value="MGI"/>
</dbReference>
<dbReference type="GO" id="GO:0007411">
    <property type="term" value="P:axon guidance"/>
    <property type="evidence" value="ECO:0007669"/>
    <property type="project" value="Ensembl"/>
</dbReference>
<dbReference type="GO" id="GO:0060219">
    <property type="term" value="P:camera-type eye photoreceptor cell differentiation"/>
    <property type="evidence" value="ECO:0007669"/>
    <property type="project" value="Ensembl"/>
</dbReference>
<dbReference type="GO" id="GO:0060271">
    <property type="term" value="P:cilium assembly"/>
    <property type="evidence" value="ECO:0000304"/>
    <property type="project" value="BHF-UCL"/>
</dbReference>
<dbReference type="GO" id="GO:0048560">
    <property type="term" value="P:establishment of anatomical structure orientation"/>
    <property type="evidence" value="ECO:0000315"/>
    <property type="project" value="BHF-UCL"/>
</dbReference>
<dbReference type="GO" id="GO:0045198">
    <property type="term" value="P:establishment of epithelial cell apical/basal polarity"/>
    <property type="evidence" value="ECO:0007669"/>
    <property type="project" value="Ensembl"/>
</dbReference>
<dbReference type="GO" id="GO:0001736">
    <property type="term" value="P:establishment of planar polarity"/>
    <property type="evidence" value="ECO:0007669"/>
    <property type="project" value="Ensembl"/>
</dbReference>
<dbReference type="GO" id="GO:0045444">
    <property type="term" value="P:fat cell differentiation"/>
    <property type="evidence" value="ECO:0007669"/>
    <property type="project" value="Ensembl"/>
</dbReference>
<dbReference type="GO" id="GO:0060122">
    <property type="term" value="P:inner ear receptor cell stereocilium organization"/>
    <property type="evidence" value="ECO:0007669"/>
    <property type="project" value="Ensembl"/>
</dbReference>
<dbReference type="GO" id="GO:1903251">
    <property type="term" value="P:multi-ciliated epithelial cell differentiation"/>
    <property type="evidence" value="ECO:0007669"/>
    <property type="project" value="Ensembl"/>
</dbReference>
<dbReference type="GO" id="GO:0035264">
    <property type="term" value="P:multicellular organism growth"/>
    <property type="evidence" value="ECO:0007669"/>
    <property type="project" value="Ensembl"/>
</dbReference>
<dbReference type="GO" id="GO:1905515">
    <property type="term" value="P:non-motile cilium assembly"/>
    <property type="evidence" value="ECO:0000318"/>
    <property type="project" value="GO_Central"/>
</dbReference>
<dbReference type="GO" id="GO:0021772">
    <property type="term" value="P:olfactory bulb development"/>
    <property type="evidence" value="ECO:0007669"/>
    <property type="project" value="Ensembl"/>
</dbReference>
<dbReference type="GO" id="GO:0072659">
    <property type="term" value="P:protein localization to plasma membrane"/>
    <property type="evidence" value="ECO:0007669"/>
    <property type="project" value="Ensembl"/>
</dbReference>
<dbReference type="GO" id="GO:0015031">
    <property type="term" value="P:protein transport"/>
    <property type="evidence" value="ECO:0007669"/>
    <property type="project" value="UniProtKB-KW"/>
</dbReference>
<dbReference type="GO" id="GO:0032880">
    <property type="term" value="P:regulation of protein localization"/>
    <property type="evidence" value="ECO:0007669"/>
    <property type="project" value="Ensembl"/>
</dbReference>
<dbReference type="GO" id="GO:0051492">
    <property type="term" value="P:regulation of stress fiber assembly"/>
    <property type="evidence" value="ECO:0007669"/>
    <property type="project" value="Ensembl"/>
</dbReference>
<dbReference type="GO" id="GO:0061326">
    <property type="term" value="P:renal tubule development"/>
    <property type="evidence" value="ECO:0007669"/>
    <property type="project" value="Ensembl"/>
</dbReference>
<dbReference type="GO" id="GO:0007608">
    <property type="term" value="P:sensory perception of smell"/>
    <property type="evidence" value="ECO:0007669"/>
    <property type="project" value="Ensembl"/>
</dbReference>
<dbReference type="GO" id="GO:0050893">
    <property type="term" value="P:sensory processing"/>
    <property type="evidence" value="ECO:0000304"/>
    <property type="project" value="BHF-UCL"/>
</dbReference>
<dbReference type="CDD" id="cd21341">
    <property type="entry name" value="TTC8_N"/>
    <property type="match status" value="1"/>
</dbReference>
<dbReference type="FunFam" id="1.25.40.10:FF:000120">
    <property type="entry name" value="Tetratricopeptide repeat domain 8"/>
    <property type="match status" value="1"/>
</dbReference>
<dbReference type="FunFam" id="1.25.40.10:FF:000121">
    <property type="entry name" value="Tetratricopeptide repeat domain 8"/>
    <property type="match status" value="1"/>
</dbReference>
<dbReference type="FunFam" id="1.25.40.10:FF:000173">
    <property type="entry name" value="Tetratricopeptide repeat domain 8"/>
    <property type="match status" value="1"/>
</dbReference>
<dbReference type="Gene3D" id="1.25.40.10">
    <property type="entry name" value="Tetratricopeptide repeat domain"/>
    <property type="match status" value="3"/>
</dbReference>
<dbReference type="InterPro" id="IPR028796">
    <property type="entry name" value="BBS8"/>
</dbReference>
<dbReference type="InterPro" id="IPR011990">
    <property type="entry name" value="TPR-like_helical_dom_sf"/>
</dbReference>
<dbReference type="InterPro" id="IPR019734">
    <property type="entry name" value="TPR_rpt"/>
</dbReference>
<dbReference type="PANTHER" id="PTHR44177">
    <property type="entry name" value="TETRATRICOPEPTIDE REPEAT PROTEIN 8"/>
    <property type="match status" value="1"/>
</dbReference>
<dbReference type="PANTHER" id="PTHR44177:SF1">
    <property type="entry name" value="TETRATRICOPEPTIDE REPEAT PROTEIN 8"/>
    <property type="match status" value="1"/>
</dbReference>
<dbReference type="Pfam" id="PF13432">
    <property type="entry name" value="TPR_16"/>
    <property type="match status" value="1"/>
</dbReference>
<dbReference type="Pfam" id="PF13181">
    <property type="entry name" value="TPR_8"/>
    <property type="match status" value="1"/>
</dbReference>
<dbReference type="SMART" id="SM00028">
    <property type="entry name" value="TPR"/>
    <property type="match status" value="8"/>
</dbReference>
<dbReference type="SUPFAM" id="SSF48452">
    <property type="entry name" value="TPR-like"/>
    <property type="match status" value="2"/>
</dbReference>
<dbReference type="PROSITE" id="PS50005">
    <property type="entry name" value="TPR"/>
    <property type="match status" value="6"/>
</dbReference>
<dbReference type="PROSITE" id="PS50293">
    <property type="entry name" value="TPR_REGION"/>
    <property type="match status" value="2"/>
</dbReference>
<protein>
    <recommendedName>
        <fullName>Tetratricopeptide repeat protein 8</fullName>
        <shortName>TPR repeat protein 8</shortName>
    </recommendedName>
    <alternativeName>
        <fullName>Bardet-Biedl syndrome 8 protein</fullName>
    </alternativeName>
</protein>
<organism>
    <name type="scientific">Homo sapiens</name>
    <name type="common">Human</name>
    <dbReference type="NCBI Taxonomy" id="9606"/>
    <lineage>
        <taxon>Eukaryota</taxon>
        <taxon>Metazoa</taxon>
        <taxon>Chordata</taxon>
        <taxon>Craniata</taxon>
        <taxon>Vertebrata</taxon>
        <taxon>Euteleostomi</taxon>
        <taxon>Mammalia</taxon>
        <taxon>Eutheria</taxon>
        <taxon>Euarchontoglires</taxon>
        <taxon>Primates</taxon>
        <taxon>Haplorrhini</taxon>
        <taxon>Catarrhini</taxon>
        <taxon>Hominidae</taxon>
        <taxon>Homo</taxon>
    </lineage>
</organism>
<sequence length="541" mass="61534">MSSEMEPLLLAWSYFRRRKFQLCADLCTQMLEKSPYDQEPDPELPVHQAAWILKARALTEMVYIDEIDVDQEGIAEMMLDENAIAQVPRPGTSLKLPGTNQTGGPSQAVRPITQAGRPITGFLRPSTQSGRPGTMEQAIRTPRTAYTARPITSSSGRFVRLGTASMLTSPDGPFINLSRLNLTKYSQKPKLAKALFEYIFHHENDVKTIHLEDVVLHLGIYPFLLRNKNHIEKNALDLAALSTEHSQYKDWWWKVQIGKCYYRLGMYREAEKQFKSALKQQEMVDTFLYLAKVYVSLDQPVTALNLFKQGLDKFPGEVTLLCGIARIYEEMNNMSSAAEYYKEVLKQDNTHVEAIACIGSNHFYSDQPEIALRFYRRLLQMGIYNGQLFNNLGLCCFYAQQYDMTLTSFERALSLAENEEEAADVWYNLGHVAVGIGDTNLAHQCFRLALVNNNNHAEAYNNLAVLEMRKGHVEQARALLQTASSLAPHMYEPHFNFATISDKIGDLQRSYVAAQKSEAAFPDHVDTQHLIKQLRQHFAML</sequence>